<feature type="chain" id="PRO_0000210290" description="Probable mitochondrial import inner membrane translocase subunit Tim17 1">
    <location>
        <begin position="1"/>
        <end position="179"/>
    </location>
</feature>
<feature type="transmembrane region" description="Helical" evidence="2">
    <location>
        <begin position="17"/>
        <end position="37"/>
    </location>
</feature>
<feature type="transmembrane region" description="Helical" evidence="2">
    <location>
        <begin position="61"/>
        <end position="81"/>
    </location>
</feature>
<feature type="transmembrane region" description="Helical" evidence="2">
    <location>
        <begin position="113"/>
        <end position="133"/>
    </location>
</feature>
<comment type="function">
    <text evidence="1">Essential component of the TIM23 complex, a complex that mediates the translocation of transit peptide-containing proteins across the mitochondrial inner membrane.</text>
</comment>
<comment type="subunit">
    <text evidence="1">Component of the TIM23 complex at least composed of Tim23, Tim17 (Tim17a1, Tim17a2 or Tim17b1) and a Tim50. The complex interacts with the Tim44 component of the PAM complex (By similarity).</text>
</comment>
<comment type="subcellular location">
    <subcellularLocation>
        <location evidence="1">Mitochondrion inner membrane</location>
        <topology evidence="1">Multi-pass membrane protein</topology>
    </subcellularLocation>
</comment>
<comment type="similarity">
    <text evidence="3">Belongs to the Tim17/Tim22/Tim23 family.</text>
</comment>
<reference key="1">
    <citation type="journal article" date="2000" name="Science">
        <title>The genome sequence of Drosophila melanogaster.</title>
        <authorList>
            <person name="Adams M.D."/>
            <person name="Celniker S.E."/>
            <person name="Holt R.A."/>
            <person name="Evans C.A."/>
            <person name="Gocayne J.D."/>
            <person name="Amanatides P.G."/>
            <person name="Scherer S.E."/>
            <person name="Li P.W."/>
            <person name="Hoskins R.A."/>
            <person name="Galle R.F."/>
            <person name="George R.A."/>
            <person name="Lewis S.E."/>
            <person name="Richards S."/>
            <person name="Ashburner M."/>
            <person name="Henderson S.N."/>
            <person name="Sutton G.G."/>
            <person name="Wortman J.R."/>
            <person name="Yandell M.D."/>
            <person name="Zhang Q."/>
            <person name="Chen L.X."/>
            <person name="Brandon R.C."/>
            <person name="Rogers Y.-H.C."/>
            <person name="Blazej R.G."/>
            <person name="Champe M."/>
            <person name="Pfeiffer B.D."/>
            <person name="Wan K.H."/>
            <person name="Doyle C."/>
            <person name="Baxter E.G."/>
            <person name="Helt G."/>
            <person name="Nelson C.R."/>
            <person name="Miklos G.L.G."/>
            <person name="Abril J.F."/>
            <person name="Agbayani A."/>
            <person name="An H.-J."/>
            <person name="Andrews-Pfannkoch C."/>
            <person name="Baldwin D."/>
            <person name="Ballew R.M."/>
            <person name="Basu A."/>
            <person name="Baxendale J."/>
            <person name="Bayraktaroglu L."/>
            <person name="Beasley E.M."/>
            <person name="Beeson K.Y."/>
            <person name="Benos P.V."/>
            <person name="Berman B.P."/>
            <person name="Bhandari D."/>
            <person name="Bolshakov S."/>
            <person name="Borkova D."/>
            <person name="Botchan M.R."/>
            <person name="Bouck J."/>
            <person name="Brokstein P."/>
            <person name="Brottier P."/>
            <person name="Burtis K.C."/>
            <person name="Busam D.A."/>
            <person name="Butler H."/>
            <person name="Cadieu E."/>
            <person name="Center A."/>
            <person name="Chandra I."/>
            <person name="Cherry J.M."/>
            <person name="Cawley S."/>
            <person name="Dahlke C."/>
            <person name="Davenport L.B."/>
            <person name="Davies P."/>
            <person name="de Pablos B."/>
            <person name="Delcher A."/>
            <person name="Deng Z."/>
            <person name="Mays A.D."/>
            <person name="Dew I."/>
            <person name="Dietz S.M."/>
            <person name="Dodson K."/>
            <person name="Doup L.E."/>
            <person name="Downes M."/>
            <person name="Dugan-Rocha S."/>
            <person name="Dunkov B.C."/>
            <person name="Dunn P."/>
            <person name="Durbin K.J."/>
            <person name="Evangelista C.C."/>
            <person name="Ferraz C."/>
            <person name="Ferriera S."/>
            <person name="Fleischmann W."/>
            <person name="Fosler C."/>
            <person name="Gabrielian A.E."/>
            <person name="Garg N.S."/>
            <person name="Gelbart W.M."/>
            <person name="Glasser K."/>
            <person name="Glodek A."/>
            <person name="Gong F."/>
            <person name="Gorrell J.H."/>
            <person name="Gu Z."/>
            <person name="Guan P."/>
            <person name="Harris M."/>
            <person name="Harris N.L."/>
            <person name="Harvey D.A."/>
            <person name="Heiman T.J."/>
            <person name="Hernandez J.R."/>
            <person name="Houck J."/>
            <person name="Hostin D."/>
            <person name="Houston K.A."/>
            <person name="Howland T.J."/>
            <person name="Wei M.-H."/>
            <person name="Ibegwam C."/>
            <person name="Jalali M."/>
            <person name="Kalush F."/>
            <person name="Karpen G.H."/>
            <person name="Ke Z."/>
            <person name="Kennison J.A."/>
            <person name="Ketchum K.A."/>
            <person name="Kimmel B.E."/>
            <person name="Kodira C.D."/>
            <person name="Kraft C.L."/>
            <person name="Kravitz S."/>
            <person name="Kulp D."/>
            <person name="Lai Z."/>
            <person name="Lasko P."/>
            <person name="Lei Y."/>
            <person name="Levitsky A.A."/>
            <person name="Li J.H."/>
            <person name="Li Z."/>
            <person name="Liang Y."/>
            <person name="Lin X."/>
            <person name="Liu X."/>
            <person name="Mattei B."/>
            <person name="McIntosh T.C."/>
            <person name="McLeod M.P."/>
            <person name="McPherson D."/>
            <person name="Merkulov G."/>
            <person name="Milshina N.V."/>
            <person name="Mobarry C."/>
            <person name="Morris J."/>
            <person name="Moshrefi A."/>
            <person name="Mount S.M."/>
            <person name="Moy M."/>
            <person name="Murphy B."/>
            <person name="Murphy L."/>
            <person name="Muzny D.M."/>
            <person name="Nelson D.L."/>
            <person name="Nelson D.R."/>
            <person name="Nelson K.A."/>
            <person name="Nixon K."/>
            <person name="Nusskern D.R."/>
            <person name="Pacleb J.M."/>
            <person name="Palazzolo M."/>
            <person name="Pittman G.S."/>
            <person name="Pan S."/>
            <person name="Pollard J."/>
            <person name="Puri V."/>
            <person name="Reese M.G."/>
            <person name="Reinert K."/>
            <person name="Remington K."/>
            <person name="Saunders R.D.C."/>
            <person name="Scheeler F."/>
            <person name="Shen H."/>
            <person name="Shue B.C."/>
            <person name="Siden-Kiamos I."/>
            <person name="Simpson M."/>
            <person name="Skupski M.P."/>
            <person name="Smith T.J."/>
            <person name="Spier E."/>
            <person name="Spradling A.C."/>
            <person name="Stapleton M."/>
            <person name="Strong R."/>
            <person name="Sun E."/>
            <person name="Svirskas R."/>
            <person name="Tector C."/>
            <person name="Turner R."/>
            <person name="Venter E."/>
            <person name="Wang A.H."/>
            <person name="Wang X."/>
            <person name="Wang Z.-Y."/>
            <person name="Wassarman D.A."/>
            <person name="Weinstock G.M."/>
            <person name="Weissenbach J."/>
            <person name="Williams S.M."/>
            <person name="Woodage T."/>
            <person name="Worley K.C."/>
            <person name="Wu D."/>
            <person name="Yang S."/>
            <person name="Yao Q.A."/>
            <person name="Ye J."/>
            <person name="Yeh R.-F."/>
            <person name="Zaveri J.S."/>
            <person name="Zhan M."/>
            <person name="Zhang G."/>
            <person name="Zhao Q."/>
            <person name="Zheng L."/>
            <person name="Zheng X.H."/>
            <person name="Zhong F.N."/>
            <person name="Zhong W."/>
            <person name="Zhou X."/>
            <person name="Zhu S.C."/>
            <person name="Zhu X."/>
            <person name="Smith H.O."/>
            <person name="Gibbs R.A."/>
            <person name="Myers E.W."/>
            <person name="Rubin G.M."/>
            <person name="Venter J.C."/>
        </authorList>
    </citation>
    <scope>NUCLEOTIDE SEQUENCE [LARGE SCALE GENOMIC DNA]</scope>
    <source>
        <strain>Berkeley</strain>
    </source>
</reference>
<reference key="2">
    <citation type="journal article" date="2002" name="Genome Biol.">
        <title>Annotation of the Drosophila melanogaster euchromatic genome: a systematic review.</title>
        <authorList>
            <person name="Misra S."/>
            <person name="Crosby M.A."/>
            <person name="Mungall C.J."/>
            <person name="Matthews B.B."/>
            <person name="Campbell K.S."/>
            <person name="Hradecky P."/>
            <person name="Huang Y."/>
            <person name="Kaminker J.S."/>
            <person name="Millburn G.H."/>
            <person name="Prochnik S.E."/>
            <person name="Smith C.D."/>
            <person name="Tupy J.L."/>
            <person name="Whitfield E.J."/>
            <person name="Bayraktaroglu L."/>
            <person name="Berman B.P."/>
            <person name="Bettencourt B.R."/>
            <person name="Celniker S.E."/>
            <person name="de Grey A.D.N.J."/>
            <person name="Drysdale R.A."/>
            <person name="Harris N.L."/>
            <person name="Richter J."/>
            <person name="Russo S."/>
            <person name="Schroeder A.J."/>
            <person name="Shu S.Q."/>
            <person name="Stapleton M."/>
            <person name="Yamada C."/>
            <person name="Ashburner M."/>
            <person name="Gelbart W.M."/>
            <person name="Rubin G.M."/>
            <person name="Lewis S.E."/>
        </authorList>
    </citation>
    <scope>GENOME REANNOTATION</scope>
    <source>
        <strain>Berkeley</strain>
    </source>
</reference>
<reference key="3">
    <citation type="journal article" date="2002" name="Genome Biol.">
        <title>A Drosophila full-length cDNA resource.</title>
        <authorList>
            <person name="Stapleton M."/>
            <person name="Carlson J.W."/>
            <person name="Brokstein P."/>
            <person name="Yu C."/>
            <person name="Champe M."/>
            <person name="George R.A."/>
            <person name="Guarin H."/>
            <person name="Kronmiller B."/>
            <person name="Pacleb J.M."/>
            <person name="Park S."/>
            <person name="Wan K.H."/>
            <person name="Rubin G.M."/>
            <person name="Celniker S.E."/>
        </authorList>
    </citation>
    <scope>NUCLEOTIDE SEQUENCE [LARGE SCALE MRNA]</scope>
    <source>
        <strain>Berkeley</strain>
        <tissue>Testis</tissue>
    </source>
</reference>
<reference key="4">
    <citation type="submission" date="2006-12" db="EMBL/GenBank/DDBJ databases">
        <authorList>
            <person name="Stapleton M."/>
            <person name="Carlson J.W."/>
            <person name="Frise E."/>
            <person name="Kapadia B."/>
            <person name="Park S."/>
            <person name="Wan K.H."/>
            <person name="Yu C."/>
            <person name="Celniker S.E."/>
        </authorList>
    </citation>
    <scope>NUCLEOTIDE SEQUENCE [LARGE SCALE MRNA]</scope>
    <source>
        <strain>Berkeley</strain>
    </source>
</reference>
<proteinExistence type="evidence at transcript level"/>
<dbReference type="EMBL" id="AE014297">
    <property type="protein sequence ID" value="AAF52046.2"/>
    <property type="molecule type" value="Genomic_DNA"/>
</dbReference>
<dbReference type="EMBL" id="AY113269">
    <property type="protein sequence ID" value="AAM29274.1"/>
    <property type="molecule type" value="mRNA"/>
</dbReference>
<dbReference type="EMBL" id="BT029703">
    <property type="protein sequence ID" value="ABL75760.1"/>
    <property type="molecule type" value="mRNA"/>
</dbReference>
<dbReference type="RefSeq" id="NP_649526.2">
    <property type="nucleotide sequence ID" value="NM_141269.3"/>
</dbReference>
<dbReference type="SMR" id="Q9VNA0"/>
<dbReference type="FunCoup" id="Q9VNA0">
    <property type="interactions" value="383"/>
</dbReference>
<dbReference type="IntAct" id="Q9VNA0">
    <property type="interactions" value="1"/>
</dbReference>
<dbReference type="STRING" id="7227.FBpp0078430"/>
<dbReference type="PaxDb" id="7227-FBpp0078430"/>
<dbReference type="DNASU" id="40635"/>
<dbReference type="EnsemblMetazoa" id="FBtr0078784">
    <property type="protein sequence ID" value="FBpp0078430"/>
    <property type="gene ID" value="FBgn0037310"/>
</dbReference>
<dbReference type="GeneID" id="40635"/>
<dbReference type="KEGG" id="dme:Dmel_CG1158"/>
<dbReference type="UCSC" id="CG1158-RA">
    <property type="organism name" value="d. melanogaster"/>
</dbReference>
<dbReference type="AGR" id="FB:FBgn0037310"/>
<dbReference type="CTD" id="40635"/>
<dbReference type="FlyBase" id="FBgn0037310">
    <property type="gene designation" value="Tim17b1"/>
</dbReference>
<dbReference type="VEuPathDB" id="VectorBase:FBgn0037310"/>
<dbReference type="eggNOG" id="KOG1652">
    <property type="taxonomic scope" value="Eukaryota"/>
</dbReference>
<dbReference type="GeneTree" id="ENSGT00390000017780"/>
<dbReference type="HOGENOM" id="CLU_087811_3_0_1"/>
<dbReference type="InParanoid" id="Q9VNA0"/>
<dbReference type="OMA" id="FRIVEDC"/>
<dbReference type="OrthoDB" id="2261329at2759"/>
<dbReference type="PhylomeDB" id="Q9VNA0"/>
<dbReference type="Reactome" id="R-DME-1268020">
    <property type="pathway name" value="Mitochondrial protein import"/>
</dbReference>
<dbReference type="BioGRID-ORCS" id="40635">
    <property type="hits" value="0 hits in 3 CRISPR screens"/>
</dbReference>
<dbReference type="ChiTaRS" id="Tim17b1">
    <property type="organism name" value="fly"/>
</dbReference>
<dbReference type="GenomeRNAi" id="40635"/>
<dbReference type="PRO" id="PR:Q9VNA0"/>
<dbReference type="Proteomes" id="UP000000803">
    <property type="component" value="Chromosome 3R"/>
</dbReference>
<dbReference type="Bgee" id="FBgn0037310">
    <property type="expression patterns" value="Expressed in adult Malpighian tubule principal cell of initial segment in Malpighian tubule and 58 other cell types or tissues"/>
</dbReference>
<dbReference type="GO" id="GO:0005743">
    <property type="term" value="C:mitochondrial inner membrane"/>
    <property type="evidence" value="ECO:0000250"/>
    <property type="project" value="FlyBase"/>
</dbReference>
<dbReference type="GO" id="GO:0005744">
    <property type="term" value="C:TIM23 mitochondrial import inner membrane translocase complex"/>
    <property type="evidence" value="ECO:0000318"/>
    <property type="project" value="GO_Central"/>
</dbReference>
<dbReference type="GO" id="GO:0030150">
    <property type="term" value="P:protein import into mitochondrial matrix"/>
    <property type="evidence" value="ECO:0000250"/>
    <property type="project" value="FlyBase"/>
</dbReference>
<dbReference type="GO" id="GO:0045039">
    <property type="term" value="P:protein insertion into mitochondrial inner membrane"/>
    <property type="evidence" value="ECO:0000250"/>
    <property type="project" value="FlyBase"/>
</dbReference>
<dbReference type="PANTHER" id="PTHR10485:SF0">
    <property type="entry name" value="AT05822P-RELATED"/>
    <property type="match status" value="1"/>
</dbReference>
<dbReference type="PANTHER" id="PTHR10485">
    <property type="entry name" value="MITOCHONDRIAL IMPORT INNER MEMBRANE TRANSLOCASE SUBUNIT TIM-17"/>
    <property type="match status" value="1"/>
</dbReference>
<dbReference type="Pfam" id="PF02466">
    <property type="entry name" value="Tim17"/>
    <property type="match status" value="1"/>
</dbReference>
<protein>
    <recommendedName>
        <fullName>Probable mitochondrial import inner membrane translocase subunit Tim17 1</fullName>
    </recommendedName>
</protein>
<name>TI17A_DROME</name>
<organism>
    <name type="scientific">Drosophila melanogaster</name>
    <name type="common">Fruit fly</name>
    <dbReference type="NCBI Taxonomy" id="7227"/>
    <lineage>
        <taxon>Eukaryota</taxon>
        <taxon>Metazoa</taxon>
        <taxon>Ecdysozoa</taxon>
        <taxon>Arthropoda</taxon>
        <taxon>Hexapoda</taxon>
        <taxon>Insecta</taxon>
        <taxon>Pterygota</taxon>
        <taxon>Neoptera</taxon>
        <taxon>Endopterygota</taxon>
        <taxon>Diptera</taxon>
        <taxon>Brachycera</taxon>
        <taxon>Muscomorpha</taxon>
        <taxon>Ephydroidea</taxon>
        <taxon>Drosophilidae</taxon>
        <taxon>Drosophila</taxon>
        <taxon>Sophophora</taxon>
    </lineage>
</organism>
<evidence type="ECO:0000250" key="1"/>
<evidence type="ECO:0000255" key="2"/>
<evidence type="ECO:0000305" key="3"/>
<sequence length="179" mass="18669">MAEYGREPCPFRIVEDCGGAFAMGALGGGAFQAIKGFRNAPSGLGYRLSGGLAAVRARSGLVGGNFAVWGATFSAIDCSLVYFRKKEDPWNAIISGATTGGILAARTGLTSMLSSALVGGALLALIEGVGIVVSHYSADSYRQVSPVERQQRYKQELLRQQKGVSPLAATYGEIDSSAL</sequence>
<keyword id="KW-0472">Membrane</keyword>
<keyword id="KW-0496">Mitochondrion</keyword>
<keyword id="KW-0999">Mitochondrion inner membrane</keyword>
<keyword id="KW-0653">Protein transport</keyword>
<keyword id="KW-1185">Reference proteome</keyword>
<keyword id="KW-0811">Translocation</keyword>
<keyword id="KW-0812">Transmembrane</keyword>
<keyword id="KW-1133">Transmembrane helix</keyword>
<keyword id="KW-0813">Transport</keyword>
<accession>Q9VNA0</accession>
<accession>A1A730</accession>
<accession>Q8MZB4</accession>
<gene>
    <name type="primary">Tim17b1</name>
    <name type="ORF">CG1158</name>
</gene>